<evidence type="ECO:0000250" key="1"/>
<evidence type="ECO:0000250" key="2">
    <source>
        <dbReference type="UniProtKB" id="P0C6T2"/>
    </source>
</evidence>
<evidence type="ECO:0000250" key="3">
    <source>
        <dbReference type="UniProtKB" id="Q99380"/>
    </source>
</evidence>
<evidence type="ECO:0000255" key="4"/>
<evidence type="ECO:0000312" key="5">
    <source>
        <dbReference type="EMBL" id="EDW58717.1"/>
    </source>
</evidence>
<feature type="chain" id="PRO_0000386616" description="Dolichyl-diphosphooligosaccharide--protein glycosyltransferase subunit 4">
    <location>
        <begin position="1"/>
        <end position="40"/>
    </location>
</feature>
<feature type="topological domain" description="Lumenal" evidence="4">
    <location>
        <begin position="1"/>
        <end position="4"/>
    </location>
</feature>
<feature type="transmembrane region" description="Helical" evidence="4">
    <location>
        <begin position="5"/>
        <end position="25"/>
    </location>
</feature>
<feature type="topological domain" description="Cytoplasmic" evidence="4">
    <location>
        <begin position="26"/>
        <end position="40"/>
    </location>
</feature>
<keyword id="KW-0256">Endoplasmic reticulum</keyword>
<keyword id="KW-0472">Membrane</keyword>
<keyword id="KW-1185">Reference proteome</keyword>
<keyword id="KW-0735">Signal-anchor</keyword>
<keyword id="KW-0812">Transmembrane</keyword>
<keyword id="KW-1133">Transmembrane helix</keyword>
<dbReference type="EMBL" id="CH940662">
    <property type="protein sequence ID" value="EDW58717.1"/>
    <property type="molecule type" value="Genomic_DNA"/>
</dbReference>
<dbReference type="SMR" id="B4MDV2"/>
<dbReference type="FunCoup" id="B4MDV2">
    <property type="interactions" value="108"/>
</dbReference>
<dbReference type="STRING" id="7244.B4MDV2"/>
<dbReference type="EnsemblMetazoa" id="FBtr0233962">
    <property type="protein sequence ID" value="FBpp0232454"/>
    <property type="gene ID" value="FBgn0205202"/>
</dbReference>
<dbReference type="EnsemblMetazoa" id="XM_002059269.3">
    <property type="protein sequence ID" value="XP_002059305.1"/>
    <property type="gene ID" value="LOC6635987"/>
</dbReference>
<dbReference type="GeneID" id="6635987"/>
<dbReference type="KEGG" id="dvi:6635987"/>
<dbReference type="eggNOG" id="ENOG502TACJ">
    <property type="taxonomic scope" value="Eukaryota"/>
</dbReference>
<dbReference type="HOGENOM" id="CLU_186352_2_0_1"/>
<dbReference type="InParanoid" id="B4MDV2"/>
<dbReference type="PhylomeDB" id="B4MDV2"/>
<dbReference type="Proteomes" id="UP000008792">
    <property type="component" value="Unassembled WGS sequence"/>
</dbReference>
<dbReference type="GO" id="GO:0008250">
    <property type="term" value="C:oligosaccharyltransferase complex"/>
    <property type="evidence" value="ECO:0000250"/>
    <property type="project" value="UniProtKB"/>
</dbReference>
<dbReference type="GO" id="GO:0006487">
    <property type="term" value="P:protein N-linked glycosylation"/>
    <property type="evidence" value="ECO:0000250"/>
    <property type="project" value="UniProtKB"/>
</dbReference>
<dbReference type="GO" id="GO:0018279">
    <property type="term" value="P:protein N-linked glycosylation via asparagine"/>
    <property type="evidence" value="ECO:0007669"/>
    <property type="project" value="TreeGrafter"/>
</dbReference>
<dbReference type="InterPro" id="IPR018943">
    <property type="entry name" value="Oligosaccaryltransferase"/>
</dbReference>
<dbReference type="InterPro" id="IPR051307">
    <property type="entry name" value="OST4"/>
</dbReference>
<dbReference type="InterPro" id="IPR036330">
    <property type="entry name" value="Ost4p_sf"/>
</dbReference>
<dbReference type="PANTHER" id="PTHR48164">
    <property type="entry name" value="DOLICHYL-DIPHOSPHOOLIGOSACCHARIDE--PROTEIN GLYCOSYLTRANSFERASE SUBUNIT 4"/>
    <property type="match status" value="1"/>
</dbReference>
<dbReference type="PANTHER" id="PTHR48164:SF1">
    <property type="entry name" value="DOLICHYL-DIPHOSPHOOLIGOSACCHARIDE--PROTEIN GLYCOSYLTRANSFERASE SUBUNIT 4"/>
    <property type="match status" value="1"/>
</dbReference>
<dbReference type="Pfam" id="PF10215">
    <property type="entry name" value="Ost4"/>
    <property type="match status" value="1"/>
</dbReference>
<dbReference type="SUPFAM" id="SSF103464">
    <property type="entry name" value="Oligosaccharyltransferase subunit ost4p"/>
    <property type="match status" value="1"/>
</dbReference>
<reference evidence="5" key="1">
    <citation type="journal article" date="2007" name="Nature">
        <title>Evolution of genes and genomes on the Drosophila phylogeny.</title>
        <authorList>
            <consortium name="Drosophila 12 genomes consortium"/>
        </authorList>
    </citation>
    <scope>NUCLEOTIDE SEQUENCE [LARGE SCALE GENOMIC DNA]</scope>
    <source>
        <strain evidence="5">Tucson 15010-1051.87</strain>
    </source>
</reference>
<proteinExistence type="inferred from homology"/>
<sequence>MITDVQLAIFSNVLGVFLFLLVVAYHYINANTGKSSIKTK</sequence>
<protein>
    <recommendedName>
        <fullName evidence="3">Dolichyl-diphosphooligosaccharide--protein glycosyltransferase subunit 4</fullName>
    </recommendedName>
</protein>
<comment type="function">
    <text evidence="2">Subunit of the oligosaccharyl transferase (OST) complex that catalyzes the initial transfer of a defined glycan (Glc(3)Man(9)GlcNAc(2) in eukaryotes) from the lipid carrier dolichol-pyrophosphate to an asparagine residue within an Asn-X-Ser/Thr consensus motif in nascent polypeptide chains, the first step in protein N-glycosylation. N-glycosylation occurs cotranslationally and the complex associates with the Sec61 complex at the channel-forming translocon complex that mediates protein translocation across the endoplasmic reticulum (ER). All subunits are required for a maximal enzyme activity.</text>
</comment>
<comment type="subunit">
    <text evidence="2">Component of the oligosaccharyltransferase (OST) complex.</text>
</comment>
<comment type="subcellular location">
    <subcellularLocation>
        <location evidence="1">Endoplasmic reticulum membrane</location>
        <topology evidence="1">Single-pass type III membrane protein</topology>
    </subcellularLocation>
</comment>
<comment type="similarity">
    <text evidence="4">Belongs to the OST4 family.</text>
</comment>
<organism>
    <name type="scientific">Drosophila virilis</name>
    <name type="common">Fruit fly</name>
    <dbReference type="NCBI Taxonomy" id="7244"/>
    <lineage>
        <taxon>Eukaryota</taxon>
        <taxon>Metazoa</taxon>
        <taxon>Ecdysozoa</taxon>
        <taxon>Arthropoda</taxon>
        <taxon>Hexapoda</taxon>
        <taxon>Insecta</taxon>
        <taxon>Pterygota</taxon>
        <taxon>Neoptera</taxon>
        <taxon>Endopterygota</taxon>
        <taxon>Diptera</taxon>
        <taxon>Brachycera</taxon>
        <taxon>Muscomorpha</taxon>
        <taxon>Ephydroidea</taxon>
        <taxon>Drosophilidae</taxon>
        <taxon>Drosophila</taxon>
    </lineage>
</organism>
<name>OST4_DROVI</name>
<gene>
    <name type="ORF">GJ18037</name>
</gene>
<accession>B4MDV2</accession>